<dbReference type="EC" id="2.3.1.234" evidence="1"/>
<dbReference type="EMBL" id="AP009153">
    <property type="protein sequence ID" value="BAH37661.1"/>
    <property type="molecule type" value="Genomic_DNA"/>
</dbReference>
<dbReference type="SMR" id="C1A601"/>
<dbReference type="STRING" id="379066.GAU_0619"/>
<dbReference type="KEGG" id="gau:GAU_0619"/>
<dbReference type="eggNOG" id="COG0533">
    <property type="taxonomic scope" value="Bacteria"/>
</dbReference>
<dbReference type="HOGENOM" id="CLU_023208_0_2_0"/>
<dbReference type="Proteomes" id="UP000002209">
    <property type="component" value="Chromosome"/>
</dbReference>
<dbReference type="GO" id="GO:0005737">
    <property type="term" value="C:cytoplasm"/>
    <property type="evidence" value="ECO:0007669"/>
    <property type="project" value="UniProtKB-SubCell"/>
</dbReference>
<dbReference type="GO" id="GO:0005506">
    <property type="term" value="F:iron ion binding"/>
    <property type="evidence" value="ECO:0007669"/>
    <property type="project" value="UniProtKB-UniRule"/>
</dbReference>
<dbReference type="GO" id="GO:0061711">
    <property type="term" value="F:N(6)-L-threonylcarbamoyladenine synthase activity"/>
    <property type="evidence" value="ECO:0007669"/>
    <property type="project" value="UniProtKB-EC"/>
</dbReference>
<dbReference type="GO" id="GO:0002949">
    <property type="term" value="P:tRNA threonylcarbamoyladenosine modification"/>
    <property type="evidence" value="ECO:0007669"/>
    <property type="project" value="UniProtKB-UniRule"/>
</dbReference>
<dbReference type="CDD" id="cd24133">
    <property type="entry name" value="ASKHA_NBD_TsaD_bac"/>
    <property type="match status" value="1"/>
</dbReference>
<dbReference type="FunFam" id="3.30.420.40:FF:000012">
    <property type="entry name" value="tRNA N6-adenosine threonylcarbamoyltransferase"/>
    <property type="match status" value="1"/>
</dbReference>
<dbReference type="Gene3D" id="3.30.420.40">
    <property type="match status" value="2"/>
</dbReference>
<dbReference type="HAMAP" id="MF_01445">
    <property type="entry name" value="TsaD"/>
    <property type="match status" value="1"/>
</dbReference>
<dbReference type="InterPro" id="IPR043129">
    <property type="entry name" value="ATPase_NBD"/>
</dbReference>
<dbReference type="InterPro" id="IPR000905">
    <property type="entry name" value="Gcp-like_dom"/>
</dbReference>
<dbReference type="InterPro" id="IPR017861">
    <property type="entry name" value="KAE1/TsaD"/>
</dbReference>
<dbReference type="InterPro" id="IPR017860">
    <property type="entry name" value="Peptidase_M22_CS"/>
</dbReference>
<dbReference type="InterPro" id="IPR022450">
    <property type="entry name" value="TsaD"/>
</dbReference>
<dbReference type="NCBIfam" id="TIGR00329">
    <property type="entry name" value="gcp_kae1"/>
    <property type="match status" value="1"/>
</dbReference>
<dbReference type="NCBIfam" id="TIGR03723">
    <property type="entry name" value="T6A_TsaD_YgjD"/>
    <property type="match status" value="1"/>
</dbReference>
<dbReference type="PANTHER" id="PTHR11735">
    <property type="entry name" value="TRNA N6-ADENOSINE THREONYLCARBAMOYLTRANSFERASE"/>
    <property type="match status" value="1"/>
</dbReference>
<dbReference type="PANTHER" id="PTHR11735:SF6">
    <property type="entry name" value="TRNA N6-ADENOSINE THREONYLCARBAMOYLTRANSFERASE, MITOCHONDRIAL"/>
    <property type="match status" value="1"/>
</dbReference>
<dbReference type="Pfam" id="PF00814">
    <property type="entry name" value="TsaD"/>
    <property type="match status" value="1"/>
</dbReference>
<dbReference type="PRINTS" id="PR00789">
    <property type="entry name" value="OSIALOPTASE"/>
</dbReference>
<dbReference type="SUPFAM" id="SSF53067">
    <property type="entry name" value="Actin-like ATPase domain"/>
    <property type="match status" value="1"/>
</dbReference>
<dbReference type="PROSITE" id="PS01016">
    <property type="entry name" value="GLYCOPROTEASE"/>
    <property type="match status" value="1"/>
</dbReference>
<gene>
    <name evidence="1" type="primary">tsaD</name>
    <name type="synonym">gcp</name>
    <name type="ordered locus">GAU_0619</name>
</gene>
<protein>
    <recommendedName>
        <fullName evidence="1">tRNA N6-adenosine threonylcarbamoyltransferase</fullName>
        <ecNumber evidence="1">2.3.1.234</ecNumber>
    </recommendedName>
    <alternativeName>
        <fullName evidence="1">N6-L-threonylcarbamoyladenine synthase</fullName>
        <shortName evidence="1">t(6)A synthase</shortName>
    </alternativeName>
    <alternativeName>
        <fullName evidence="1">t(6)A37 threonylcarbamoyladenosine biosynthesis protein TsaD</fullName>
    </alternativeName>
    <alternativeName>
        <fullName evidence="1">tRNA threonylcarbamoyladenosine biosynthesis protein TsaD</fullName>
    </alternativeName>
</protein>
<name>TSAD_GEMAT</name>
<sequence length="357" mass="37805">MRVLGIETSCDETSAAVVSGTPEAMTLESCVILSQDVHRLFGGVVPEIASRQHLIGIVPAVAAALQEAQVSLSDIDAVAVTHAPGLVGALLVGTSFAKSLALSYDKPLVPVHHLEGHLFATLLEHPDAAPPFTALLVSGGHTLLLDVPAWGEYRLLGQTRDDAVGEAFDKVAKLLGLPYPGGRPIEQLAATAEAPVHKHPHRFARPMLRKSSTPADEDYYDCSFSGLKTAVLYAVRDAERTGTLDDARASIARGFQDAVIDTLVEKVVRAARQHRRSRVVLGGGVACNQALQAAMRNAMEQRKGHVFAPSPRLATDNAAMIAAAGIFRLQRGEFAAPDMTATASLPIPGMIVLSSAR</sequence>
<feature type="chain" id="PRO_1000215300" description="tRNA N6-adenosine threonylcarbamoyltransferase">
    <location>
        <begin position="1"/>
        <end position="357"/>
    </location>
</feature>
<feature type="binding site" evidence="1">
    <location>
        <position position="113"/>
    </location>
    <ligand>
        <name>Fe cation</name>
        <dbReference type="ChEBI" id="CHEBI:24875"/>
    </ligand>
</feature>
<feature type="binding site" evidence="1">
    <location>
        <position position="117"/>
    </location>
    <ligand>
        <name>Fe cation</name>
        <dbReference type="ChEBI" id="CHEBI:24875"/>
    </ligand>
</feature>
<feature type="binding site" evidence="1">
    <location>
        <begin position="136"/>
        <end position="140"/>
    </location>
    <ligand>
        <name>substrate</name>
    </ligand>
</feature>
<feature type="binding site" evidence="1">
    <location>
        <position position="169"/>
    </location>
    <ligand>
        <name>substrate</name>
    </ligand>
</feature>
<feature type="binding site" evidence="1">
    <location>
        <position position="182"/>
    </location>
    <ligand>
        <name>substrate</name>
    </ligand>
</feature>
<feature type="binding site" evidence="1">
    <location>
        <position position="288"/>
    </location>
    <ligand>
        <name>substrate</name>
    </ligand>
</feature>
<feature type="binding site" evidence="1">
    <location>
        <position position="316"/>
    </location>
    <ligand>
        <name>Fe cation</name>
        <dbReference type="ChEBI" id="CHEBI:24875"/>
    </ligand>
</feature>
<evidence type="ECO:0000255" key="1">
    <source>
        <dbReference type="HAMAP-Rule" id="MF_01445"/>
    </source>
</evidence>
<organism>
    <name type="scientific">Gemmatimonas aurantiaca (strain DSM 14586 / JCM 11422 / NBRC 100505 / T-27)</name>
    <dbReference type="NCBI Taxonomy" id="379066"/>
    <lineage>
        <taxon>Bacteria</taxon>
        <taxon>Pseudomonadati</taxon>
        <taxon>Gemmatimonadota</taxon>
        <taxon>Gemmatimonadia</taxon>
        <taxon>Gemmatimonadales</taxon>
        <taxon>Gemmatimonadaceae</taxon>
        <taxon>Gemmatimonas</taxon>
    </lineage>
</organism>
<reference key="1">
    <citation type="submission" date="2006-03" db="EMBL/GenBank/DDBJ databases">
        <title>Complete genome sequence of Gemmatimonas aurantiaca T-27 that represents a novel phylum Gemmatimonadetes.</title>
        <authorList>
            <person name="Takasaki K."/>
            <person name="Ichikawa N."/>
            <person name="Miura H."/>
            <person name="Matsushita S."/>
            <person name="Watanabe Y."/>
            <person name="Oguchi A."/>
            <person name="Ankai A."/>
            <person name="Yashiro I."/>
            <person name="Takahashi M."/>
            <person name="Terui Y."/>
            <person name="Fukui S."/>
            <person name="Yokoyama H."/>
            <person name="Tanikawa S."/>
            <person name="Hanada S."/>
            <person name="Kamagata Y."/>
            <person name="Fujita N."/>
        </authorList>
    </citation>
    <scope>NUCLEOTIDE SEQUENCE [LARGE SCALE GENOMIC DNA]</scope>
    <source>
        <strain>DSM 14586 / JCM 11422 / NBRC 100505 / T-27</strain>
    </source>
</reference>
<keyword id="KW-0012">Acyltransferase</keyword>
<keyword id="KW-0963">Cytoplasm</keyword>
<keyword id="KW-0408">Iron</keyword>
<keyword id="KW-0479">Metal-binding</keyword>
<keyword id="KW-1185">Reference proteome</keyword>
<keyword id="KW-0808">Transferase</keyword>
<keyword id="KW-0819">tRNA processing</keyword>
<proteinExistence type="inferred from homology"/>
<accession>C1A601</accession>
<comment type="function">
    <text evidence="1">Required for the formation of a threonylcarbamoyl group on adenosine at position 37 (t(6)A37) in tRNAs that read codons beginning with adenine. Is involved in the transfer of the threonylcarbamoyl moiety of threonylcarbamoyl-AMP (TC-AMP) to the N6 group of A37, together with TsaE and TsaB. TsaD likely plays a direct catalytic role in this reaction.</text>
</comment>
<comment type="catalytic activity">
    <reaction evidence="1">
        <text>L-threonylcarbamoyladenylate + adenosine(37) in tRNA = N(6)-L-threonylcarbamoyladenosine(37) in tRNA + AMP + H(+)</text>
        <dbReference type="Rhea" id="RHEA:37059"/>
        <dbReference type="Rhea" id="RHEA-COMP:10162"/>
        <dbReference type="Rhea" id="RHEA-COMP:10163"/>
        <dbReference type="ChEBI" id="CHEBI:15378"/>
        <dbReference type="ChEBI" id="CHEBI:73682"/>
        <dbReference type="ChEBI" id="CHEBI:74411"/>
        <dbReference type="ChEBI" id="CHEBI:74418"/>
        <dbReference type="ChEBI" id="CHEBI:456215"/>
        <dbReference type="EC" id="2.3.1.234"/>
    </reaction>
</comment>
<comment type="cofactor">
    <cofactor evidence="1">
        <name>Fe(2+)</name>
        <dbReference type="ChEBI" id="CHEBI:29033"/>
    </cofactor>
    <text evidence="1">Binds 1 Fe(2+) ion per subunit.</text>
</comment>
<comment type="subcellular location">
    <subcellularLocation>
        <location evidence="1">Cytoplasm</location>
    </subcellularLocation>
</comment>
<comment type="similarity">
    <text evidence="1">Belongs to the KAE1 / TsaD family.</text>
</comment>